<feature type="chain" id="PRO_1000131226" description="Ribosomal RNA large subunit methyltransferase H">
    <location>
        <begin position="1"/>
        <end position="159"/>
    </location>
</feature>
<feature type="binding site" evidence="1">
    <location>
        <position position="76"/>
    </location>
    <ligand>
        <name>S-adenosyl-L-methionine</name>
        <dbReference type="ChEBI" id="CHEBI:59789"/>
    </ligand>
</feature>
<feature type="binding site" evidence="1">
    <location>
        <position position="108"/>
    </location>
    <ligand>
        <name>S-adenosyl-L-methionine</name>
        <dbReference type="ChEBI" id="CHEBI:59789"/>
    </ligand>
</feature>
<feature type="binding site" evidence="1">
    <location>
        <begin position="127"/>
        <end position="132"/>
    </location>
    <ligand>
        <name>S-adenosyl-L-methionine</name>
        <dbReference type="ChEBI" id="CHEBI:59789"/>
    </ligand>
</feature>
<keyword id="KW-0963">Cytoplasm</keyword>
<keyword id="KW-0489">Methyltransferase</keyword>
<keyword id="KW-0698">rRNA processing</keyword>
<keyword id="KW-0949">S-adenosyl-L-methionine</keyword>
<keyword id="KW-0808">Transferase</keyword>
<accession>B7HGB9</accession>
<name>RLMH_BACC4</name>
<proteinExistence type="inferred from homology"/>
<protein>
    <recommendedName>
        <fullName evidence="1">Ribosomal RNA large subunit methyltransferase H</fullName>
        <ecNumber evidence="1">2.1.1.177</ecNumber>
    </recommendedName>
    <alternativeName>
        <fullName evidence="1">23S rRNA (pseudouridine1915-N3)-methyltransferase</fullName>
    </alternativeName>
    <alternativeName>
        <fullName evidence="1">23S rRNA m3Psi1915 methyltransferase</fullName>
    </alternativeName>
    <alternativeName>
        <fullName evidence="1">rRNA (pseudouridine-N3-)-methyltransferase RlmH</fullName>
    </alternativeName>
</protein>
<sequence length="159" mass="17927">MNISIISIGKLKEKYLKQGIAEYLKRLSAYAKVEVIELPDEKAPENLSEAEMLIVKEKEGIRILDKISDDTHVIALAIEGKQKSSEEFAVSLDRLATYGKSKVAFVIGGSLGLSSEVMKRSNESLSFSKMTLPHQLMRLVLLEQVYRAFRINRGEPYHK</sequence>
<evidence type="ECO:0000255" key="1">
    <source>
        <dbReference type="HAMAP-Rule" id="MF_00658"/>
    </source>
</evidence>
<organism>
    <name type="scientific">Bacillus cereus (strain B4264)</name>
    <dbReference type="NCBI Taxonomy" id="405532"/>
    <lineage>
        <taxon>Bacteria</taxon>
        <taxon>Bacillati</taxon>
        <taxon>Bacillota</taxon>
        <taxon>Bacilli</taxon>
        <taxon>Bacillales</taxon>
        <taxon>Bacillaceae</taxon>
        <taxon>Bacillus</taxon>
        <taxon>Bacillus cereus group</taxon>
    </lineage>
</organism>
<gene>
    <name evidence="1" type="primary">rlmH</name>
    <name type="ordered locus">BCB4264_A5582</name>
</gene>
<reference key="1">
    <citation type="submission" date="2008-10" db="EMBL/GenBank/DDBJ databases">
        <title>Genome sequence of Bacillus cereus B4264.</title>
        <authorList>
            <person name="Dodson R.J."/>
            <person name="Durkin A.S."/>
            <person name="Rosovitz M.J."/>
            <person name="Rasko D.A."/>
            <person name="Hoffmaster A."/>
            <person name="Ravel J."/>
            <person name="Sutton G."/>
        </authorList>
    </citation>
    <scope>NUCLEOTIDE SEQUENCE [LARGE SCALE GENOMIC DNA]</scope>
    <source>
        <strain>B4264</strain>
    </source>
</reference>
<comment type="function">
    <text evidence="1">Specifically methylates the pseudouridine at position 1915 (m3Psi1915) in 23S rRNA.</text>
</comment>
<comment type="catalytic activity">
    <reaction evidence="1">
        <text>pseudouridine(1915) in 23S rRNA + S-adenosyl-L-methionine = N(3)-methylpseudouridine(1915) in 23S rRNA + S-adenosyl-L-homocysteine + H(+)</text>
        <dbReference type="Rhea" id="RHEA:42752"/>
        <dbReference type="Rhea" id="RHEA-COMP:10221"/>
        <dbReference type="Rhea" id="RHEA-COMP:10222"/>
        <dbReference type="ChEBI" id="CHEBI:15378"/>
        <dbReference type="ChEBI" id="CHEBI:57856"/>
        <dbReference type="ChEBI" id="CHEBI:59789"/>
        <dbReference type="ChEBI" id="CHEBI:65314"/>
        <dbReference type="ChEBI" id="CHEBI:74486"/>
        <dbReference type="EC" id="2.1.1.177"/>
    </reaction>
</comment>
<comment type="subunit">
    <text evidence="1">Homodimer.</text>
</comment>
<comment type="subcellular location">
    <subcellularLocation>
        <location evidence="1">Cytoplasm</location>
    </subcellularLocation>
</comment>
<comment type="similarity">
    <text evidence="1">Belongs to the RNA methyltransferase RlmH family.</text>
</comment>
<dbReference type="EC" id="2.1.1.177" evidence="1"/>
<dbReference type="EMBL" id="CP001176">
    <property type="protein sequence ID" value="ACK59080.1"/>
    <property type="molecule type" value="Genomic_DNA"/>
</dbReference>
<dbReference type="RefSeq" id="WP_001027003.1">
    <property type="nucleotide sequence ID" value="NZ_VEHB01000004.1"/>
</dbReference>
<dbReference type="SMR" id="B7HGB9"/>
<dbReference type="GeneID" id="93005667"/>
<dbReference type="KEGG" id="bcb:BCB4264_A5582"/>
<dbReference type="HOGENOM" id="CLU_100552_0_0_9"/>
<dbReference type="Proteomes" id="UP000007096">
    <property type="component" value="Chromosome"/>
</dbReference>
<dbReference type="GO" id="GO:0005737">
    <property type="term" value="C:cytoplasm"/>
    <property type="evidence" value="ECO:0007669"/>
    <property type="project" value="UniProtKB-SubCell"/>
</dbReference>
<dbReference type="GO" id="GO:0070038">
    <property type="term" value="F:rRNA (pseudouridine-N3-)-methyltransferase activity"/>
    <property type="evidence" value="ECO:0007669"/>
    <property type="project" value="UniProtKB-UniRule"/>
</dbReference>
<dbReference type="CDD" id="cd18081">
    <property type="entry name" value="RlmH-like"/>
    <property type="match status" value="1"/>
</dbReference>
<dbReference type="Gene3D" id="3.40.1280.10">
    <property type="match status" value="1"/>
</dbReference>
<dbReference type="HAMAP" id="MF_00658">
    <property type="entry name" value="23SrRNA_methyltr_H"/>
    <property type="match status" value="1"/>
</dbReference>
<dbReference type="InterPro" id="IPR029028">
    <property type="entry name" value="Alpha/beta_knot_MTases"/>
</dbReference>
<dbReference type="InterPro" id="IPR003742">
    <property type="entry name" value="RlmH-like"/>
</dbReference>
<dbReference type="InterPro" id="IPR029026">
    <property type="entry name" value="tRNA_m1G_MTases_N"/>
</dbReference>
<dbReference type="NCBIfam" id="NF000985">
    <property type="entry name" value="PRK00103.1-3"/>
    <property type="match status" value="1"/>
</dbReference>
<dbReference type="NCBIfam" id="TIGR00246">
    <property type="entry name" value="tRNA_RlmH_YbeA"/>
    <property type="match status" value="1"/>
</dbReference>
<dbReference type="PANTHER" id="PTHR33603">
    <property type="entry name" value="METHYLTRANSFERASE"/>
    <property type="match status" value="1"/>
</dbReference>
<dbReference type="PANTHER" id="PTHR33603:SF1">
    <property type="entry name" value="RIBOSOMAL RNA LARGE SUBUNIT METHYLTRANSFERASE H"/>
    <property type="match status" value="1"/>
</dbReference>
<dbReference type="Pfam" id="PF02590">
    <property type="entry name" value="SPOUT_MTase"/>
    <property type="match status" value="1"/>
</dbReference>
<dbReference type="PIRSF" id="PIRSF004505">
    <property type="entry name" value="MT_bac"/>
    <property type="match status" value="1"/>
</dbReference>
<dbReference type="SUPFAM" id="SSF75217">
    <property type="entry name" value="alpha/beta knot"/>
    <property type="match status" value="1"/>
</dbReference>